<gene>
    <name evidence="1" type="primary">chdC</name>
    <name type="ordered locus">SAHV_0585</name>
</gene>
<dbReference type="EC" id="1.3.98.5" evidence="1"/>
<dbReference type="EMBL" id="AP009324">
    <property type="protein sequence ID" value="BAF77468.1"/>
    <property type="molecule type" value="Genomic_DNA"/>
</dbReference>
<dbReference type="SMR" id="A7WZ30"/>
<dbReference type="KEGG" id="saw:SAHV_0585"/>
<dbReference type="HOGENOM" id="CLU_063226_1_0_9"/>
<dbReference type="UniPathway" id="UPA00252"/>
<dbReference type="GO" id="GO:0020037">
    <property type="term" value="F:heme binding"/>
    <property type="evidence" value="ECO:0007669"/>
    <property type="project" value="InterPro"/>
</dbReference>
<dbReference type="GO" id="GO:0046872">
    <property type="term" value="F:metal ion binding"/>
    <property type="evidence" value="ECO:0007669"/>
    <property type="project" value="UniProtKB-KW"/>
</dbReference>
<dbReference type="GO" id="GO:0016634">
    <property type="term" value="F:oxidoreductase activity, acting on the CH-CH group of donors, oxygen as acceptor"/>
    <property type="evidence" value="ECO:0007669"/>
    <property type="project" value="UniProtKB-UniRule"/>
</dbReference>
<dbReference type="GO" id="GO:0004601">
    <property type="term" value="F:peroxidase activity"/>
    <property type="evidence" value="ECO:0007669"/>
    <property type="project" value="InterPro"/>
</dbReference>
<dbReference type="GO" id="GO:0006785">
    <property type="term" value="P:heme B biosynthetic process"/>
    <property type="evidence" value="ECO:0007669"/>
    <property type="project" value="UniProtKB-UniRule"/>
</dbReference>
<dbReference type="Gene3D" id="3.30.70.1030">
    <property type="entry name" value="Apc35880, domain 1"/>
    <property type="match status" value="2"/>
</dbReference>
<dbReference type="HAMAP" id="MF_01442">
    <property type="entry name" value="Coproheme_decarbox_1"/>
    <property type="match status" value="1"/>
</dbReference>
<dbReference type="InterPro" id="IPR031332">
    <property type="entry name" value="CHDC"/>
</dbReference>
<dbReference type="InterPro" id="IPR010644">
    <property type="entry name" value="ChdC/CLD"/>
</dbReference>
<dbReference type="InterPro" id="IPR011008">
    <property type="entry name" value="Dimeric_a/b-barrel"/>
</dbReference>
<dbReference type="NCBIfam" id="NF008913">
    <property type="entry name" value="PRK12276.1"/>
    <property type="match status" value="1"/>
</dbReference>
<dbReference type="PANTHER" id="PTHR36843:SF1">
    <property type="entry name" value="COPROHEME DECARBOXYLASE"/>
    <property type="match status" value="1"/>
</dbReference>
<dbReference type="PANTHER" id="PTHR36843">
    <property type="entry name" value="HEME-DEPENDENT PEROXIDASE YWFI-RELATED"/>
    <property type="match status" value="1"/>
</dbReference>
<dbReference type="Pfam" id="PF06778">
    <property type="entry name" value="Chlor_dismutase"/>
    <property type="match status" value="1"/>
</dbReference>
<dbReference type="SUPFAM" id="SSF54909">
    <property type="entry name" value="Dimeric alpha+beta barrel"/>
    <property type="match status" value="1"/>
</dbReference>
<evidence type="ECO:0000255" key="1">
    <source>
        <dbReference type="HAMAP-Rule" id="MF_01442"/>
    </source>
</evidence>
<organism>
    <name type="scientific">Staphylococcus aureus (strain Mu3 / ATCC 700698)</name>
    <dbReference type="NCBI Taxonomy" id="418127"/>
    <lineage>
        <taxon>Bacteria</taxon>
        <taxon>Bacillati</taxon>
        <taxon>Bacillota</taxon>
        <taxon>Bacilli</taxon>
        <taxon>Bacillales</taxon>
        <taxon>Staphylococcaceae</taxon>
        <taxon>Staphylococcus</taxon>
    </lineage>
</organism>
<sequence>MSQAAETLDGWYSLHLFYAVDWASLRIVPKDERDALVTEFQSFLENTATVRSSKSGDQAIYNITGQKADLLLWFLRPEMKSLNHIENEFNKLRIADFLIPTYSYVSVIELSNYLAGKSDEDPYENPHIKARLYPELPHSDYICFYPMNKRRNETYNWYMLTMEERQKLMYDHGMIGRKYAGKIKQFITGSVGFDDFEWGVTLFSDDVLQFKKIVYEMRFDETTARYGEFGSFFVGHLINTNEFDQFFAIS</sequence>
<feature type="chain" id="PRO_1000024420" description="Coproheme decarboxylase">
    <location>
        <begin position="1"/>
        <end position="250"/>
    </location>
</feature>
<feature type="active site" evidence="1">
    <location>
        <position position="145"/>
    </location>
</feature>
<feature type="binding site" evidence="1">
    <location>
        <position position="131"/>
    </location>
    <ligand>
        <name>Fe-coproporphyrin III</name>
        <dbReference type="ChEBI" id="CHEBI:68438"/>
    </ligand>
</feature>
<feature type="binding site" evidence="1">
    <location>
        <begin position="145"/>
        <end position="149"/>
    </location>
    <ligand>
        <name>Fe-coproporphyrin III</name>
        <dbReference type="ChEBI" id="CHEBI:68438"/>
    </ligand>
</feature>
<feature type="binding site" description="axial binding residue" evidence="1">
    <location>
        <position position="172"/>
    </location>
    <ligand>
        <name>Fe-coproporphyrin III</name>
        <dbReference type="ChEBI" id="CHEBI:68438"/>
    </ligand>
    <ligandPart>
        <name>Fe</name>
        <dbReference type="ChEBI" id="CHEBI:18248"/>
    </ligandPart>
</feature>
<feature type="binding site" evidence="1">
    <location>
        <position position="185"/>
    </location>
    <ligand>
        <name>Fe-coproporphyrin III</name>
        <dbReference type="ChEBI" id="CHEBI:68438"/>
    </ligand>
</feature>
<protein>
    <recommendedName>
        <fullName evidence="1">Coproheme decarboxylase</fullName>
        <ecNumber evidence="1">1.3.98.5</ecNumber>
    </recommendedName>
    <alternativeName>
        <fullName evidence="1">Coproheme III oxidative decarboxylase</fullName>
    </alternativeName>
    <alternativeName>
        <fullName evidence="1">Hydrogen peroxide-dependent heme synthase</fullName>
    </alternativeName>
</protein>
<name>CHDC_STAA1</name>
<accession>A7WZ30</accession>
<reference key="1">
    <citation type="journal article" date="2008" name="Antimicrob. Agents Chemother.">
        <title>Mutated response regulator graR is responsible for phenotypic conversion of Staphylococcus aureus from heterogeneous vancomycin-intermediate resistance to vancomycin-intermediate resistance.</title>
        <authorList>
            <person name="Neoh H.-M."/>
            <person name="Cui L."/>
            <person name="Yuzawa H."/>
            <person name="Takeuchi F."/>
            <person name="Matsuo M."/>
            <person name="Hiramatsu K."/>
        </authorList>
    </citation>
    <scope>NUCLEOTIDE SEQUENCE [LARGE SCALE GENOMIC DNA]</scope>
    <source>
        <strain>Mu3 / ATCC 700698</strain>
    </source>
</reference>
<comment type="function">
    <text evidence="1">Involved in coproporphyrin-dependent heme b biosynthesis. Catalyzes the decarboxylation of Fe-coproporphyrin III (coproheme) to heme b (protoheme IX), the last step of the pathway. The reaction occurs in a stepwise manner with a three-propionate intermediate.</text>
</comment>
<comment type="catalytic activity">
    <reaction evidence="1">
        <text>Fe-coproporphyrin III + 2 H2O2 + 2 H(+) = heme b + 2 CO2 + 4 H2O</text>
        <dbReference type="Rhea" id="RHEA:56516"/>
        <dbReference type="ChEBI" id="CHEBI:15377"/>
        <dbReference type="ChEBI" id="CHEBI:15378"/>
        <dbReference type="ChEBI" id="CHEBI:16240"/>
        <dbReference type="ChEBI" id="CHEBI:16526"/>
        <dbReference type="ChEBI" id="CHEBI:60344"/>
        <dbReference type="ChEBI" id="CHEBI:68438"/>
        <dbReference type="EC" id="1.3.98.5"/>
    </reaction>
    <physiologicalReaction direction="left-to-right" evidence="1">
        <dbReference type="Rhea" id="RHEA:56517"/>
    </physiologicalReaction>
</comment>
<comment type="catalytic activity">
    <reaction evidence="1">
        <text>Fe-coproporphyrin III + H2O2 + H(+) = harderoheme III + CO2 + 2 H2O</text>
        <dbReference type="Rhea" id="RHEA:57940"/>
        <dbReference type="ChEBI" id="CHEBI:15377"/>
        <dbReference type="ChEBI" id="CHEBI:15378"/>
        <dbReference type="ChEBI" id="CHEBI:16240"/>
        <dbReference type="ChEBI" id="CHEBI:16526"/>
        <dbReference type="ChEBI" id="CHEBI:68438"/>
        <dbReference type="ChEBI" id="CHEBI:142463"/>
    </reaction>
    <physiologicalReaction direction="left-to-right" evidence="1">
        <dbReference type="Rhea" id="RHEA:57941"/>
    </physiologicalReaction>
</comment>
<comment type="catalytic activity">
    <reaction evidence="1">
        <text>harderoheme III + H2O2 + H(+) = heme b + CO2 + 2 H2O</text>
        <dbReference type="Rhea" id="RHEA:57944"/>
        <dbReference type="ChEBI" id="CHEBI:15377"/>
        <dbReference type="ChEBI" id="CHEBI:15378"/>
        <dbReference type="ChEBI" id="CHEBI:16240"/>
        <dbReference type="ChEBI" id="CHEBI:16526"/>
        <dbReference type="ChEBI" id="CHEBI:60344"/>
        <dbReference type="ChEBI" id="CHEBI:142463"/>
    </reaction>
    <physiologicalReaction direction="left-to-right" evidence="1">
        <dbReference type="Rhea" id="RHEA:57945"/>
    </physiologicalReaction>
</comment>
<comment type="cofactor">
    <cofactor evidence="1">
        <name>Fe-coproporphyrin III</name>
        <dbReference type="ChEBI" id="CHEBI:68438"/>
    </cofactor>
    <text evidence="1">Fe-coproporphyrin III acts both as a substrate and a redox cofactor.</text>
</comment>
<comment type="pathway">
    <text evidence="1">Porphyrin-containing compound metabolism; protoheme biosynthesis.</text>
</comment>
<comment type="similarity">
    <text evidence="1">Belongs to the ChdC family. Type 1 subfamily.</text>
</comment>
<keyword id="KW-0349">Heme</keyword>
<keyword id="KW-0350">Heme biosynthesis</keyword>
<keyword id="KW-0408">Iron</keyword>
<keyword id="KW-0479">Metal-binding</keyword>
<keyword id="KW-0560">Oxidoreductase</keyword>
<proteinExistence type="inferred from homology"/>